<gene>
    <name evidence="1" type="primary">aroE</name>
    <name type="ordered locus">SG2242</name>
</gene>
<sequence length="272" mass="29237">MDTFAVFGNPINHSRSPRIHALFVAETGITHPYGRVLAPLDGFEQTLRQFFDAGGLGANITLPFKERAFSLCDQLTERGALAGAVNTIKKQPDGSLLGDNTDGIGLVSDLQRLDLLRQDSRVLLVGVGGAARGVVLPLLAYGCKVVLTNRTFPRAQKLVGFYHHVGDISALPLERLGTPDYDLIINATSTGVQGSIPPLPASLITSSVCCYDMYYQQGDTPFITWCRRQGSLRCADGLGMLVGQAASSFLLWHGVLPSVLPVLETLRAELSA</sequence>
<accession>Q2NQQ8</accession>
<organism>
    <name type="scientific">Sodalis glossinidius (strain morsitans)</name>
    <dbReference type="NCBI Taxonomy" id="343509"/>
    <lineage>
        <taxon>Bacteria</taxon>
        <taxon>Pseudomonadati</taxon>
        <taxon>Pseudomonadota</taxon>
        <taxon>Gammaproteobacteria</taxon>
        <taxon>Enterobacterales</taxon>
        <taxon>Bruguierivoracaceae</taxon>
        <taxon>Sodalis</taxon>
    </lineage>
</organism>
<protein>
    <recommendedName>
        <fullName evidence="1">Shikimate dehydrogenase (NADP(+))</fullName>
        <shortName evidence="1">SDH</shortName>
        <ecNumber evidence="1">1.1.1.25</ecNumber>
    </recommendedName>
</protein>
<comment type="function">
    <text evidence="1">Involved in the biosynthesis of the chorismate, which leads to the biosynthesis of aromatic amino acids. Catalyzes the reversible NADPH linked reduction of 3-dehydroshikimate (DHSA) to yield shikimate (SA).</text>
</comment>
<comment type="catalytic activity">
    <reaction evidence="1">
        <text>shikimate + NADP(+) = 3-dehydroshikimate + NADPH + H(+)</text>
        <dbReference type="Rhea" id="RHEA:17737"/>
        <dbReference type="ChEBI" id="CHEBI:15378"/>
        <dbReference type="ChEBI" id="CHEBI:16630"/>
        <dbReference type="ChEBI" id="CHEBI:36208"/>
        <dbReference type="ChEBI" id="CHEBI:57783"/>
        <dbReference type="ChEBI" id="CHEBI:58349"/>
        <dbReference type="EC" id="1.1.1.25"/>
    </reaction>
</comment>
<comment type="pathway">
    <text evidence="1">Metabolic intermediate biosynthesis; chorismate biosynthesis; chorismate from D-erythrose 4-phosphate and phosphoenolpyruvate: step 4/7.</text>
</comment>
<comment type="subunit">
    <text evidence="1">Homodimer.</text>
</comment>
<comment type="similarity">
    <text evidence="1">Belongs to the shikimate dehydrogenase family.</text>
</comment>
<feature type="chain" id="PRO_1000021336" description="Shikimate dehydrogenase (NADP(+))">
    <location>
        <begin position="1"/>
        <end position="272"/>
    </location>
</feature>
<feature type="active site" description="Proton acceptor" evidence="1">
    <location>
        <position position="65"/>
    </location>
</feature>
<feature type="binding site" evidence="1">
    <location>
        <begin position="14"/>
        <end position="16"/>
    </location>
    <ligand>
        <name>shikimate</name>
        <dbReference type="ChEBI" id="CHEBI:36208"/>
    </ligand>
</feature>
<feature type="binding site" evidence="1">
    <location>
        <position position="61"/>
    </location>
    <ligand>
        <name>shikimate</name>
        <dbReference type="ChEBI" id="CHEBI:36208"/>
    </ligand>
</feature>
<feature type="binding site" evidence="1">
    <location>
        <position position="77"/>
    </location>
    <ligand>
        <name>NADP(+)</name>
        <dbReference type="ChEBI" id="CHEBI:58349"/>
    </ligand>
</feature>
<feature type="binding site" evidence="1">
    <location>
        <position position="86"/>
    </location>
    <ligand>
        <name>shikimate</name>
        <dbReference type="ChEBI" id="CHEBI:36208"/>
    </ligand>
</feature>
<feature type="binding site" evidence="1">
    <location>
        <position position="102"/>
    </location>
    <ligand>
        <name>shikimate</name>
        <dbReference type="ChEBI" id="CHEBI:36208"/>
    </ligand>
</feature>
<feature type="binding site" evidence="1">
    <location>
        <begin position="126"/>
        <end position="130"/>
    </location>
    <ligand>
        <name>NADP(+)</name>
        <dbReference type="ChEBI" id="CHEBI:58349"/>
    </ligand>
</feature>
<feature type="binding site" evidence="1">
    <location>
        <begin position="149"/>
        <end position="154"/>
    </location>
    <ligand>
        <name>NADP(+)</name>
        <dbReference type="ChEBI" id="CHEBI:58349"/>
    </ligand>
</feature>
<feature type="binding site" evidence="1">
    <location>
        <position position="213"/>
    </location>
    <ligand>
        <name>NADP(+)</name>
        <dbReference type="ChEBI" id="CHEBI:58349"/>
    </ligand>
</feature>
<feature type="binding site" evidence="1">
    <location>
        <position position="215"/>
    </location>
    <ligand>
        <name>shikimate</name>
        <dbReference type="ChEBI" id="CHEBI:36208"/>
    </ligand>
</feature>
<feature type="binding site" evidence="1">
    <location>
        <position position="237"/>
    </location>
    <ligand>
        <name>NADP(+)</name>
        <dbReference type="ChEBI" id="CHEBI:58349"/>
    </ligand>
</feature>
<keyword id="KW-0028">Amino-acid biosynthesis</keyword>
<keyword id="KW-0057">Aromatic amino acid biosynthesis</keyword>
<keyword id="KW-0521">NADP</keyword>
<keyword id="KW-0560">Oxidoreductase</keyword>
<evidence type="ECO:0000255" key="1">
    <source>
        <dbReference type="HAMAP-Rule" id="MF_00222"/>
    </source>
</evidence>
<reference key="1">
    <citation type="journal article" date="2006" name="Genome Res.">
        <title>Massive genome erosion and functional adaptations provide insights into the symbiotic lifestyle of Sodalis glossinidius in the tsetse host.</title>
        <authorList>
            <person name="Toh H."/>
            <person name="Weiss B.L."/>
            <person name="Perkin S.A.H."/>
            <person name="Yamashita A."/>
            <person name="Oshima K."/>
            <person name="Hattori M."/>
            <person name="Aksoy S."/>
        </authorList>
    </citation>
    <scope>NUCLEOTIDE SEQUENCE [LARGE SCALE GENOMIC DNA]</scope>
    <source>
        <strain>morsitans</strain>
    </source>
</reference>
<name>AROE_SODGM</name>
<dbReference type="EC" id="1.1.1.25" evidence="1"/>
<dbReference type="EMBL" id="AP008232">
    <property type="protein sequence ID" value="BAE75517.1"/>
    <property type="molecule type" value="Genomic_DNA"/>
</dbReference>
<dbReference type="RefSeq" id="WP_011412053.1">
    <property type="nucleotide sequence ID" value="NC_007712.1"/>
</dbReference>
<dbReference type="SMR" id="Q2NQQ8"/>
<dbReference type="STRING" id="343509.SG2242"/>
<dbReference type="KEGG" id="sgl:SG2242"/>
<dbReference type="eggNOG" id="COG0169">
    <property type="taxonomic scope" value="Bacteria"/>
</dbReference>
<dbReference type="HOGENOM" id="CLU_044063_2_1_6"/>
<dbReference type="OrthoDB" id="9776868at2"/>
<dbReference type="BioCyc" id="SGLO343509:SGP1_RS20645-MONOMER"/>
<dbReference type="UniPathway" id="UPA00053">
    <property type="reaction ID" value="UER00087"/>
</dbReference>
<dbReference type="Proteomes" id="UP000001932">
    <property type="component" value="Chromosome"/>
</dbReference>
<dbReference type="GO" id="GO:0005829">
    <property type="term" value="C:cytosol"/>
    <property type="evidence" value="ECO:0007669"/>
    <property type="project" value="TreeGrafter"/>
</dbReference>
<dbReference type="GO" id="GO:0050661">
    <property type="term" value="F:NADP binding"/>
    <property type="evidence" value="ECO:0007669"/>
    <property type="project" value="InterPro"/>
</dbReference>
<dbReference type="GO" id="GO:0004764">
    <property type="term" value="F:shikimate 3-dehydrogenase (NADP+) activity"/>
    <property type="evidence" value="ECO:0007669"/>
    <property type="project" value="UniProtKB-UniRule"/>
</dbReference>
<dbReference type="GO" id="GO:0008652">
    <property type="term" value="P:amino acid biosynthetic process"/>
    <property type="evidence" value="ECO:0007669"/>
    <property type="project" value="UniProtKB-KW"/>
</dbReference>
<dbReference type="GO" id="GO:0009073">
    <property type="term" value="P:aromatic amino acid family biosynthetic process"/>
    <property type="evidence" value="ECO:0007669"/>
    <property type="project" value="UniProtKB-KW"/>
</dbReference>
<dbReference type="GO" id="GO:0009423">
    <property type="term" value="P:chorismate biosynthetic process"/>
    <property type="evidence" value="ECO:0007669"/>
    <property type="project" value="UniProtKB-UniRule"/>
</dbReference>
<dbReference type="GO" id="GO:0019632">
    <property type="term" value="P:shikimate metabolic process"/>
    <property type="evidence" value="ECO:0007669"/>
    <property type="project" value="InterPro"/>
</dbReference>
<dbReference type="CDD" id="cd01065">
    <property type="entry name" value="NAD_bind_Shikimate_DH"/>
    <property type="match status" value="1"/>
</dbReference>
<dbReference type="FunFam" id="3.40.50.10860:FF:000006">
    <property type="entry name" value="Shikimate dehydrogenase (NADP(+))"/>
    <property type="match status" value="1"/>
</dbReference>
<dbReference type="FunFam" id="3.40.50.720:FF:000104">
    <property type="entry name" value="Shikimate dehydrogenase (NADP(+))"/>
    <property type="match status" value="1"/>
</dbReference>
<dbReference type="Gene3D" id="3.40.50.10860">
    <property type="entry name" value="Leucine Dehydrogenase, chain A, domain 1"/>
    <property type="match status" value="1"/>
</dbReference>
<dbReference type="Gene3D" id="3.40.50.720">
    <property type="entry name" value="NAD(P)-binding Rossmann-like Domain"/>
    <property type="match status" value="1"/>
</dbReference>
<dbReference type="HAMAP" id="MF_00222">
    <property type="entry name" value="Shikimate_DH_AroE"/>
    <property type="match status" value="1"/>
</dbReference>
<dbReference type="InterPro" id="IPR046346">
    <property type="entry name" value="Aminoacid_DH-like_N_sf"/>
</dbReference>
<dbReference type="InterPro" id="IPR036291">
    <property type="entry name" value="NAD(P)-bd_dom_sf"/>
</dbReference>
<dbReference type="InterPro" id="IPR041121">
    <property type="entry name" value="SDH_C"/>
</dbReference>
<dbReference type="InterPro" id="IPR011342">
    <property type="entry name" value="Shikimate_DH"/>
</dbReference>
<dbReference type="InterPro" id="IPR013708">
    <property type="entry name" value="Shikimate_DH-bd_N"/>
</dbReference>
<dbReference type="InterPro" id="IPR022893">
    <property type="entry name" value="Shikimate_DH_fam"/>
</dbReference>
<dbReference type="InterPro" id="IPR006151">
    <property type="entry name" value="Shikm_DH/Glu-tRNA_Rdtase"/>
</dbReference>
<dbReference type="NCBIfam" id="TIGR00507">
    <property type="entry name" value="aroE"/>
    <property type="match status" value="1"/>
</dbReference>
<dbReference type="NCBIfam" id="NF001310">
    <property type="entry name" value="PRK00258.1-2"/>
    <property type="match status" value="1"/>
</dbReference>
<dbReference type="PANTHER" id="PTHR21089:SF1">
    <property type="entry name" value="BIFUNCTIONAL 3-DEHYDROQUINATE DEHYDRATASE_SHIKIMATE DEHYDROGENASE, CHLOROPLASTIC"/>
    <property type="match status" value="1"/>
</dbReference>
<dbReference type="PANTHER" id="PTHR21089">
    <property type="entry name" value="SHIKIMATE DEHYDROGENASE"/>
    <property type="match status" value="1"/>
</dbReference>
<dbReference type="Pfam" id="PF18317">
    <property type="entry name" value="SDH_C"/>
    <property type="match status" value="1"/>
</dbReference>
<dbReference type="Pfam" id="PF01488">
    <property type="entry name" value="Shikimate_DH"/>
    <property type="match status" value="1"/>
</dbReference>
<dbReference type="Pfam" id="PF08501">
    <property type="entry name" value="Shikimate_dh_N"/>
    <property type="match status" value="1"/>
</dbReference>
<dbReference type="SUPFAM" id="SSF53223">
    <property type="entry name" value="Aminoacid dehydrogenase-like, N-terminal domain"/>
    <property type="match status" value="1"/>
</dbReference>
<dbReference type="SUPFAM" id="SSF51735">
    <property type="entry name" value="NAD(P)-binding Rossmann-fold domains"/>
    <property type="match status" value="1"/>
</dbReference>
<proteinExistence type="inferred from homology"/>